<gene>
    <name type="primary">fnr</name>
    <name type="ordered locus">c1807</name>
</gene>
<name>FNR_ECOL6</name>
<accession>P0A9E6</accession>
<accession>P03019</accession>
<comment type="function">
    <text evidence="1">Global transcription factor that controls the expression of over 100 target genes in response to anoxia. It facilitates the adaptation to anaerobic growth conditions by regulating the expression of gene products that are involved in anaerobic energy metabolism. When the terminal electron acceptor, O(2), is no longer available, it represses the synthesis of enzymes involved in aerobic respiration and increases the synthesis of enzymes required for anaerobic respiration (By similarity).</text>
</comment>
<comment type="cofactor">
    <cofactor evidence="1">
        <name>[4Fe-4S] cluster</name>
        <dbReference type="ChEBI" id="CHEBI:49883"/>
    </cofactor>
    <text evidence="1">Binds 1 [4Fe-4S] cluster per subunit.</text>
</comment>
<comment type="subunit">
    <text evidence="1">Homodimer.</text>
</comment>
<comment type="subcellular location">
    <subcellularLocation>
        <location evidence="4">Cytoplasm</location>
    </subcellularLocation>
</comment>
<comment type="sequence caution" evidence="4">
    <conflict type="erroneous initiation">
        <sequence resource="EMBL-CDS" id="AAN80271"/>
    </conflict>
</comment>
<reference key="1">
    <citation type="journal article" date="2002" name="Proc. Natl. Acad. Sci. U.S.A.">
        <title>Extensive mosaic structure revealed by the complete genome sequence of uropathogenic Escherichia coli.</title>
        <authorList>
            <person name="Welch R.A."/>
            <person name="Burland V."/>
            <person name="Plunkett G. III"/>
            <person name="Redford P."/>
            <person name="Roesch P."/>
            <person name="Rasko D."/>
            <person name="Buckles E.L."/>
            <person name="Liou S.-R."/>
            <person name="Boutin A."/>
            <person name="Hackett J."/>
            <person name="Stroud D."/>
            <person name="Mayhew G.F."/>
            <person name="Rose D.J."/>
            <person name="Zhou S."/>
            <person name="Schwartz D.C."/>
            <person name="Perna N.T."/>
            <person name="Mobley H.L.T."/>
            <person name="Donnenberg M.S."/>
            <person name="Blattner F.R."/>
        </authorList>
    </citation>
    <scope>NUCLEOTIDE SEQUENCE [LARGE SCALE GENOMIC DNA]</scope>
    <source>
        <strain>CFT073 / ATCC 700928 / UPEC</strain>
    </source>
</reference>
<proteinExistence type="inferred from homology"/>
<sequence>MIPEKRIIRRIQSGGCAIHCQDCSISQLCIPFTLNEHELDQLDNIIERKKPIQKGQTLFKAGDELKSLYAIRSGTIKSYTITEQGDEQITGFHLAGDLVGFDAIGSGHHPSFAQALETSMVCEIPFETLDDLSGKMPNLRQQMMRLMSGEIKGDQDMILLLSKKNAEERLAAFIYNLSRRFAQRGFSPREFRLTMTRGDIGNYLGLTVETISRLLGRFQKSGMLAVKGKYITIENNDALAQLAGHTRNVA</sequence>
<keyword id="KW-0004">4Fe-4S</keyword>
<keyword id="KW-0010">Activator</keyword>
<keyword id="KW-0963">Cytoplasm</keyword>
<keyword id="KW-0238">DNA-binding</keyword>
<keyword id="KW-0408">Iron</keyword>
<keyword id="KW-0411">Iron-sulfur</keyword>
<keyword id="KW-0479">Metal-binding</keyword>
<keyword id="KW-1185">Reference proteome</keyword>
<keyword id="KW-0678">Repressor</keyword>
<keyword id="KW-0804">Transcription</keyword>
<keyword id="KW-0805">Transcription regulation</keyword>
<organism>
    <name type="scientific">Escherichia coli O6:H1 (strain CFT073 / ATCC 700928 / UPEC)</name>
    <dbReference type="NCBI Taxonomy" id="199310"/>
    <lineage>
        <taxon>Bacteria</taxon>
        <taxon>Pseudomonadati</taxon>
        <taxon>Pseudomonadota</taxon>
        <taxon>Gammaproteobacteria</taxon>
        <taxon>Enterobacterales</taxon>
        <taxon>Enterobacteriaceae</taxon>
        <taxon>Escherichia</taxon>
    </lineage>
</organism>
<evidence type="ECO:0000250" key="1"/>
<evidence type="ECO:0000255" key="2"/>
<evidence type="ECO:0000255" key="3">
    <source>
        <dbReference type="PROSITE-ProRule" id="PRU00387"/>
    </source>
</evidence>
<evidence type="ECO:0000305" key="4"/>
<feature type="chain" id="PRO_0000100162" description="Fumarate and nitrate reduction regulatory protein">
    <location>
        <begin position="1"/>
        <end position="250"/>
    </location>
</feature>
<feature type="domain" description="HTH crp-type" evidence="3">
    <location>
        <begin position="164"/>
        <end position="237"/>
    </location>
</feature>
<feature type="DNA-binding region" description="H-T-H motif" evidence="3">
    <location>
        <begin position="197"/>
        <end position="216"/>
    </location>
</feature>
<feature type="region of interest" description="Essential for the oxygen-regulated activity" evidence="1">
    <location>
        <begin position="20"/>
        <end position="29"/>
    </location>
</feature>
<feature type="region of interest" description="Activating region 2A" evidence="2">
    <location>
        <begin position="47"/>
        <end position="50"/>
    </location>
</feature>
<feature type="region of interest" description="Activating region 3A" evidence="2">
    <location>
        <begin position="60"/>
        <end position="61"/>
    </location>
</feature>
<feature type="region of interest" description="Activating region 1A" evidence="2">
    <location>
        <begin position="71"/>
        <end position="75"/>
    </location>
</feature>
<feature type="region of interest" description="Activating region 3B" evidence="2">
    <location>
        <position position="81"/>
    </location>
</feature>
<feature type="region of interest" description="Activating region 3C" evidence="2">
    <location>
        <begin position="85"/>
        <end position="87"/>
    </location>
</feature>
<feature type="region of interest" description="Activating region 3D" evidence="2">
    <location>
        <position position="112"/>
    </location>
</feature>
<feature type="region of interest" description="Activating region 1B" evidence="2">
    <location>
        <begin position="116"/>
        <end position="121"/>
    </location>
</feature>
<feature type="region of interest" description="Activating region 2B" evidence="2">
    <location>
        <begin position="123"/>
        <end position="124"/>
    </location>
</feature>
<feature type="region of interest" description="Activating region 2C" evidence="2">
    <location>
        <begin position="127"/>
        <end position="128"/>
    </location>
</feature>
<feature type="region of interest" description="Dimerization" evidence="2">
    <location>
        <begin position="140"/>
        <end position="159"/>
    </location>
</feature>
<feature type="region of interest" description="Activating region 1C" evidence="2">
    <location>
        <begin position="181"/>
        <end position="191"/>
    </location>
</feature>
<feature type="binding site" evidence="2">
    <location>
        <position position="20"/>
    </location>
    <ligand>
        <name>[4Fe-4S] cluster</name>
        <dbReference type="ChEBI" id="CHEBI:49883"/>
    </ligand>
</feature>
<feature type="binding site" evidence="2">
    <location>
        <position position="23"/>
    </location>
    <ligand>
        <name>[4Fe-4S] cluster</name>
        <dbReference type="ChEBI" id="CHEBI:49883"/>
    </ligand>
</feature>
<feature type="binding site" evidence="2">
    <location>
        <position position="29"/>
    </location>
    <ligand>
        <name>[4Fe-4S] cluster</name>
        <dbReference type="ChEBI" id="CHEBI:49883"/>
    </ligand>
</feature>
<feature type="binding site" evidence="2">
    <location>
        <position position="122"/>
    </location>
    <ligand>
        <name>[4Fe-4S] cluster</name>
        <dbReference type="ChEBI" id="CHEBI:49883"/>
    </ligand>
</feature>
<dbReference type="EMBL" id="AE014075">
    <property type="protein sequence ID" value="AAN80271.1"/>
    <property type="status" value="ALT_INIT"/>
    <property type="molecule type" value="Genomic_DNA"/>
</dbReference>
<dbReference type="RefSeq" id="WP_000611911.1">
    <property type="nucleotide sequence ID" value="NZ_CP051263.1"/>
</dbReference>
<dbReference type="SMR" id="P0A9E6"/>
<dbReference type="STRING" id="199310.c1807"/>
<dbReference type="GeneID" id="93775469"/>
<dbReference type="KEGG" id="ecc:c1807"/>
<dbReference type="eggNOG" id="COG0664">
    <property type="taxonomic scope" value="Bacteria"/>
</dbReference>
<dbReference type="HOGENOM" id="CLU_075053_0_2_6"/>
<dbReference type="Proteomes" id="UP000001410">
    <property type="component" value="Chromosome"/>
</dbReference>
<dbReference type="GO" id="GO:0005829">
    <property type="term" value="C:cytosol"/>
    <property type="evidence" value="ECO:0007669"/>
    <property type="project" value="TreeGrafter"/>
</dbReference>
<dbReference type="GO" id="GO:0051539">
    <property type="term" value="F:4 iron, 4 sulfur cluster binding"/>
    <property type="evidence" value="ECO:0007669"/>
    <property type="project" value="UniProtKB-KW"/>
</dbReference>
<dbReference type="GO" id="GO:0003677">
    <property type="term" value="F:DNA binding"/>
    <property type="evidence" value="ECO:0007669"/>
    <property type="project" value="UniProtKB-KW"/>
</dbReference>
<dbReference type="GO" id="GO:0003700">
    <property type="term" value="F:DNA-binding transcription factor activity"/>
    <property type="evidence" value="ECO:0007669"/>
    <property type="project" value="InterPro"/>
</dbReference>
<dbReference type="GO" id="GO:0046872">
    <property type="term" value="F:metal ion binding"/>
    <property type="evidence" value="ECO:0007669"/>
    <property type="project" value="UniProtKB-KW"/>
</dbReference>
<dbReference type="CDD" id="cd00038">
    <property type="entry name" value="CAP_ED"/>
    <property type="match status" value="1"/>
</dbReference>
<dbReference type="CDD" id="cd00092">
    <property type="entry name" value="HTH_CRP"/>
    <property type="match status" value="1"/>
</dbReference>
<dbReference type="FunFam" id="1.10.10.10:FF:000028">
    <property type="entry name" value="Fumarate/nitrate reduction transcriptional regulator Fnr"/>
    <property type="match status" value="1"/>
</dbReference>
<dbReference type="FunFam" id="2.60.120.10:FF:000004">
    <property type="entry name" value="Fumarate/nitrate reduction transcriptional regulator Fnr"/>
    <property type="match status" value="1"/>
</dbReference>
<dbReference type="Gene3D" id="2.60.120.10">
    <property type="entry name" value="Jelly Rolls"/>
    <property type="match status" value="1"/>
</dbReference>
<dbReference type="Gene3D" id="1.10.10.10">
    <property type="entry name" value="Winged helix-like DNA-binding domain superfamily/Winged helix DNA-binding domain"/>
    <property type="match status" value="1"/>
</dbReference>
<dbReference type="InterPro" id="IPR000595">
    <property type="entry name" value="cNMP-bd_dom"/>
</dbReference>
<dbReference type="InterPro" id="IPR018490">
    <property type="entry name" value="cNMP-bd_dom_sf"/>
</dbReference>
<dbReference type="InterPro" id="IPR050397">
    <property type="entry name" value="Env_Response_Regulators"/>
</dbReference>
<dbReference type="InterPro" id="IPR012318">
    <property type="entry name" value="HTH_CRP"/>
</dbReference>
<dbReference type="InterPro" id="IPR014710">
    <property type="entry name" value="RmlC-like_jellyroll"/>
</dbReference>
<dbReference type="InterPro" id="IPR018335">
    <property type="entry name" value="Tscrpt_reg_HTH_Crp-type_CS"/>
</dbReference>
<dbReference type="InterPro" id="IPR036388">
    <property type="entry name" value="WH-like_DNA-bd_sf"/>
</dbReference>
<dbReference type="InterPro" id="IPR036390">
    <property type="entry name" value="WH_DNA-bd_sf"/>
</dbReference>
<dbReference type="NCBIfam" id="NF008365">
    <property type="entry name" value="PRK11161.1"/>
    <property type="match status" value="1"/>
</dbReference>
<dbReference type="PANTHER" id="PTHR24567">
    <property type="entry name" value="CRP FAMILY TRANSCRIPTIONAL REGULATORY PROTEIN"/>
    <property type="match status" value="1"/>
</dbReference>
<dbReference type="PANTHER" id="PTHR24567:SF75">
    <property type="entry name" value="FUMARATE AND NITRATE REDUCTION REGULATORY PROTEIN"/>
    <property type="match status" value="1"/>
</dbReference>
<dbReference type="Pfam" id="PF00027">
    <property type="entry name" value="cNMP_binding"/>
    <property type="match status" value="1"/>
</dbReference>
<dbReference type="Pfam" id="PF13545">
    <property type="entry name" value="HTH_Crp_2"/>
    <property type="match status" value="1"/>
</dbReference>
<dbReference type="PRINTS" id="PR00034">
    <property type="entry name" value="HTHCRP"/>
</dbReference>
<dbReference type="SMART" id="SM00100">
    <property type="entry name" value="cNMP"/>
    <property type="match status" value="1"/>
</dbReference>
<dbReference type="SMART" id="SM00419">
    <property type="entry name" value="HTH_CRP"/>
    <property type="match status" value="1"/>
</dbReference>
<dbReference type="SUPFAM" id="SSF51206">
    <property type="entry name" value="cAMP-binding domain-like"/>
    <property type="match status" value="1"/>
</dbReference>
<dbReference type="SUPFAM" id="SSF46785">
    <property type="entry name" value="Winged helix' DNA-binding domain"/>
    <property type="match status" value="1"/>
</dbReference>
<dbReference type="PROSITE" id="PS50042">
    <property type="entry name" value="CNMP_BINDING_3"/>
    <property type="match status" value="1"/>
</dbReference>
<dbReference type="PROSITE" id="PS00042">
    <property type="entry name" value="HTH_CRP_1"/>
    <property type="match status" value="1"/>
</dbReference>
<dbReference type="PROSITE" id="PS51063">
    <property type="entry name" value="HTH_CRP_2"/>
    <property type="match status" value="1"/>
</dbReference>
<protein>
    <recommendedName>
        <fullName>Fumarate and nitrate reduction regulatory protein</fullName>
    </recommendedName>
</protein>